<comment type="function">
    <text evidence="1">Cell wall formation.</text>
</comment>
<comment type="catalytic activity">
    <reaction evidence="1">
        <text>UDP-N-acetyl-alpha-D-muramate + L-alanine + ATP = UDP-N-acetyl-alpha-D-muramoyl-L-alanine + ADP + phosphate + H(+)</text>
        <dbReference type="Rhea" id="RHEA:23372"/>
        <dbReference type="ChEBI" id="CHEBI:15378"/>
        <dbReference type="ChEBI" id="CHEBI:30616"/>
        <dbReference type="ChEBI" id="CHEBI:43474"/>
        <dbReference type="ChEBI" id="CHEBI:57972"/>
        <dbReference type="ChEBI" id="CHEBI:70757"/>
        <dbReference type="ChEBI" id="CHEBI:83898"/>
        <dbReference type="ChEBI" id="CHEBI:456216"/>
        <dbReference type="EC" id="6.3.2.8"/>
    </reaction>
</comment>
<comment type="pathway">
    <text evidence="1">Cell wall biogenesis; peptidoglycan biosynthesis.</text>
</comment>
<comment type="subcellular location">
    <subcellularLocation>
        <location evidence="1">Cytoplasm</location>
    </subcellularLocation>
</comment>
<comment type="similarity">
    <text evidence="1">Belongs to the MurCDEF family.</text>
</comment>
<sequence length="462" mass="51298">MDINKVTAVYFVGAGGIGMSALIRYFLAKGKRVGGYDKTPSDLTEELKKEGADIHYEDNVALIGEAFKSPDDTLVVYTPAVPESHTELTYFRAHGFEVMKRARVLGEITKSSRGLCVAGTHGKTTTSSMLAHLLKQSPVDCNAFLGGILKNYESNLMLSDTSDFTVIEADEFDRSFHWLTPYMAVITSADPDHLDIYGTAEAYRESFEKFTSLIRPDGCLLIKKGINVTPRLQEGVKKYTYSVTEIADFYAENIRICDGNITFDFVGPEIRIPDVELGVPVKVNIENGVAAMAIAWLNGVKPEDLKKGMATFAGPRRRFDFHLKTDQVVLIDDYAHHPAELRQSILSVKELYAGRKVTGIFQPHLYTRTRDFAGDFAASLSLLDELILLDIYPAREEPIPGVSSRIIFDKVTIPSKTLCKKEELLDVVAAGKYEVVLMVGAGNIDRLVEPVKEILCKQIRKP</sequence>
<accession>A6LEU2</accession>
<feature type="chain" id="PRO_0000336851" description="UDP-N-acetylmuramate--L-alanine ligase">
    <location>
        <begin position="1"/>
        <end position="462"/>
    </location>
</feature>
<feature type="binding site" evidence="1">
    <location>
        <begin position="119"/>
        <end position="125"/>
    </location>
    <ligand>
        <name>ATP</name>
        <dbReference type="ChEBI" id="CHEBI:30616"/>
    </ligand>
</feature>
<keyword id="KW-0067">ATP-binding</keyword>
<keyword id="KW-0131">Cell cycle</keyword>
<keyword id="KW-0132">Cell division</keyword>
<keyword id="KW-0133">Cell shape</keyword>
<keyword id="KW-0961">Cell wall biogenesis/degradation</keyword>
<keyword id="KW-0963">Cytoplasm</keyword>
<keyword id="KW-0436">Ligase</keyword>
<keyword id="KW-0547">Nucleotide-binding</keyword>
<keyword id="KW-0573">Peptidoglycan synthesis</keyword>
<keyword id="KW-1185">Reference proteome</keyword>
<proteinExistence type="inferred from homology"/>
<dbReference type="EC" id="6.3.2.8" evidence="1"/>
<dbReference type="EMBL" id="CP000140">
    <property type="protein sequence ID" value="ABR44206.1"/>
    <property type="molecule type" value="Genomic_DNA"/>
</dbReference>
<dbReference type="RefSeq" id="WP_005861375.1">
    <property type="nucleotide sequence ID" value="NC_009615.1"/>
</dbReference>
<dbReference type="SMR" id="A6LEU2"/>
<dbReference type="STRING" id="435591.BDI_2486"/>
<dbReference type="PaxDb" id="435591-BDI_2486"/>
<dbReference type="KEGG" id="pdi:BDI_2486"/>
<dbReference type="eggNOG" id="COG0773">
    <property type="taxonomic scope" value="Bacteria"/>
</dbReference>
<dbReference type="HOGENOM" id="CLU_028104_2_2_10"/>
<dbReference type="BioCyc" id="PDIS435591:G1G5A-2555-MONOMER"/>
<dbReference type="UniPathway" id="UPA00219"/>
<dbReference type="Proteomes" id="UP000000566">
    <property type="component" value="Chromosome"/>
</dbReference>
<dbReference type="GO" id="GO:0005737">
    <property type="term" value="C:cytoplasm"/>
    <property type="evidence" value="ECO:0007669"/>
    <property type="project" value="UniProtKB-SubCell"/>
</dbReference>
<dbReference type="GO" id="GO:0005524">
    <property type="term" value="F:ATP binding"/>
    <property type="evidence" value="ECO:0007669"/>
    <property type="project" value="UniProtKB-UniRule"/>
</dbReference>
<dbReference type="GO" id="GO:0008763">
    <property type="term" value="F:UDP-N-acetylmuramate-L-alanine ligase activity"/>
    <property type="evidence" value="ECO:0007669"/>
    <property type="project" value="UniProtKB-UniRule"/>
</dbReference>
<dbReference type="GO" id="GO:0051301">
    <property type="term" value="P:cell division"/>
    <property type="evidence" value="ECO:0007669"/>
    <property type="project" value="UniProtKB-KW"/>
</dbReference>
<dbReference type="GO" id="GO:0071555">
    <property type="term" value="P:cell wall organization"/>
    <property type="evidence" value="ECO:0007669"/>
    <property type="project" value="UniProtKB-KW"/>
</dbReference>
<dbReference type="GO" id="GO:0009252">
    <property type="term" value="P:peptidoglycan biosynthetic process"/>
    <property type="evidence" value="ECO:0007669"/>
    <property type="project" value="UniProtKB-UniRule"/>
</dbReference>
<dbReference type="GO" id="GO:0008360">
    <property type="term" value="P:regulation of cell shape"/>
    <property type="evidence" value="ECO:0007669"/>
    <property type="project" value="UniProtKB-KW"/>
</dbReference>
<dbReference type="Gene3D" id="3.90.190.20">
    <property type="entry name" value="Mur ligase, C-terminal domain"/>
    <property type="match status" value="1"/>
</dbReference>
<dbReference type="Gene3D" id="3.40.1190.10">
    <property type="entry name" value="Mur-like, catalytic domain"/>
    <property type="match status" value="1"/>
</dbReference>
<dbReference type="Gene3D" id="3.40.50.720">
    <property type="entry name" value="NAD(P)-binding Rossmann-like Domain"/>
    <property type="match status" value="1"/>
</dbReference>
<dbReference type="HAMAP" id="MF_00046">
    <property type="entry name" value="MurC"/>
    <property type="match status" value="1"/>
</dbReference>
<dbReference type="InterPro" id="IPR036565">
    <property type="entry name" value="Mur-like_cat_sf"/>
</dbReference>
<dbReference type="InterPro" id="IPR004101">
    <property type="entry name" value="Mur_ligase_C"/>
</dbReference>
<dbReference type="InterPro" id="IPR036615">
    <property type="entry name" value="Mur_ligase_C_dom_sf"/>
</dbReference>
<dbReference type="InterPro" id="IPR013221">
    <property type="entry name" value="Mur_ligase_cen"/>
</dbReference>
<dbReference type="InterPro" id="IPR000713">
    <property type="entry name" value="Mur_ligase_N"/>
</dbReference>
<dbReference type="InterPro" id="IPR050061">
    <property type="entry name" value="MurCDEF_pg_biosynth"/>
</dbReference>
<dbReference type="InterPro" id="IPR005758">
    <property type="entry name" value="UDP-N-AcMur_Ala_ligase_MurC"/>
</dbReference>
<dbReference type="NCBIfam" id="TIGR01082">
    <property type="entry name" value="murC"/>
    <property type="match status" value="1"/>
</dbReference>
<dbReference type="PANTHER" id="PTHR43445:SF3">
    <property type="entry name" value="UDP-N-ACETYLMURAMATE--L-ALANINE LIGASE"/>
    <property type="match status" value="1"/>
</dbReference>
<dbReference type="PANTHER" id="PTHR43445">
    <property type="entry name" value="UDP-N-ACETYLMURAMATE--L-ALANINE LIGASE-RELATED"/>
    <property type="match status" value="1"/>
</dbReference>
<dbReference type="Pfam" id="PF01225">
    <property type="entry name" value="Mur_ligase"/>
    <property type="match status" value="1"/>
</dbReference>
<dbReference type="Pfam" id="PF02875">
    <property type="entry name" value="Mur_ligase_C"/>
    <property type="match status" value="1"/>
</dbReference>
<dbReference type="Pfam" id="PF08245">
    <property type="entry name" value="Mur_ligase_M"/>
    <property type="match status" value="1"/>
</dbReference>
<dbReference type="SUPFAM" id="SSF51984">
    <property type="entry name" value="MurCD N-terminal domain"/>
    <property type="match status" value="1"/>
</dbReference>
<dbReference type="SUPFAM" id="SSF53623">
    <property type="entry name" value="MurD-like peptide ligases, catalytic domain"/>
    <property type="match status" value="1"/>
</dbReference>
<dbReference type="SUPFAM" id="SSF53244">
    <property type="entry name" value="MurD-like peptide ligases, peptide-binding domain"/>
    <property type="match status" value="1"/>
</dbReference>
<protein>
    <recommendedName>
        <fullName evidence="1">UDP-N-acetylmuramate--L-alanine ligase</fullName>
        <ecNumber evidence="1">6.3.2.8</ecNumber>
    </recommendedName>
    <alternativeName>
        <fullName evidence="1">UDP-N-acetylmuramoyl-L-alanine synthetase</fullName>
    </alternativeName>
</protein>
<gene>
    <name evidence="1" type="primary">murC</name>
    <name type="ordered locus">BDI_2486</name>
</gene>
<reference key="1">
    <citation type="journal article" date="2007" name="PLoS Biol.">
        <title>Evolution of symbiotic bacteria in the distal human intestine.</title>
        <authorList>
            <person name="Xu J."/>
            <person name="Mahowald M.A."/>
            <person name="Ley R.E."/>
            <person name="Lozupone C.A."/>
            <person name="Hamady M."/>
            <person name="Martens E.C."/>
            <person name="Henrissat B."/>
            <person name="Coutinho P.M."/>
            <person name="Minx P."/>
            <person name="Latreille P."/>
            <person name="Cordum H."/>
            <person name="Van Brunt A."/>
            <person name="Kim K."/>
            <person name="Fulton R.S."/>
            <person name="Fulton L.A."/>
            <person name="Clifton S.W."/>
            <person name="Wilson R.K."/>
            <person name="Knight R.D."/>
            <person name="Gordon J.I."/>
        </authorList>
    </citation>
    <scope>NUCLEOTIDE SEQUENCE [LARGE SCALE GENOMIC DNA]</scope>
    <source>
        <strain>ATCC 8503 / DSM 20701 / CIP 104284 / JCM 5825 / NCTC 11152</strain>
    </source>
</reference>
<evidence type="ECO:0000255" key="1">
    <source>
        <dbReference type="HAMAP-Rule" id="MF_00046"/>
    </source>
</evidence>
<organism>
    <name type="scientific">Parabacteroides distasonis (strain ATCC 8503 / DSM 20701 / CIP 104284 / JCM 5825 / NCTC 11152)</name>
    <dbReference type="NCBI Taxonomy" id="435591"/>
    <lineage>
        <taxon>Bacteria</taxon>
        <taxon>Pseudomonadati</taxon>
        <taxon>Bacteroidota</taxon>
        <taxon>Bacteroidia</taxon>
        <taxon>Bacteroidales</taxon>
        <taxon>Tannerellaceae</taxon>
        <taxon>Parabacteroides</taxon>
    </lineage>
</organism>
<name>MURC_PARD8</name>